<organism>
    <name type="scientific">Escherichia coli O8 (strain IAI1)</name>
    <dbReference type="NCBI Taxonomy" id="585034"/>
    <lineage>
        <taxon>Bacteria</taxon>
        <taxon>Pseudomonadati</taxon>
        <taxon>Pseudomonadota</taxon>
        <taxon>Gammaproteobacteria</taxon>
        <taxon>Enterobacterales</taxon>
        <taxon>Enterobacteriaceae</taxon>
        <taxon>Escherichia</taxon>
    </lineage>
</organism>
<accession>B7M730</accession>
<feature type="chain" id="PRO_1000195636" description="Large ribosomal subunit protein uL11">
    <location>
        <begin position="1"/>
        <end position="142"/>
    </location>
</feature>
<proteinExistence type="inferred from homology"/>
<reference key="1">
    <citation type="journal article" date="2009" name="PLoS Genet.">
        <title>Organised genome dynamics in the Escherichia coli species results in highly diverse adaptive paths.</title>
        <authorList>
            <person name="Touchon M."/>
            <person name="Hoede C."/>
            <person name="Tenaillon O."/>
            <person name="Barbe V."/>
            <person name="Baeriswyl S."/>
            <person name="Bidet P."/>
            <person name="Bingen E."/>
            <person name="Bonacorsi S."/>
            <person name="Bouchier C."/>
            <person name="Bouvet O."/>
            <person name="Calteau A."/>
            <person name="Chiapello H."/>
            <person name="Clermont O."/>
            <person name="Cruveiller S."/>
            <person name="Danchin A."/>
            <person name="Diard M."/>
            <person name="Dossat C."/>
            <person name="Karoui M.E."/>
            <person name="Frapy E."/>
            <person name="Garry L."/>
            <person name="Ghigo J.M."/>
            <person name="Gilles A.M."/>
            <person name="Johnson J."/>
            <person name="Le Bouguenec C."/>
            <person name="Lescat M."/>
            <person name="Mangenot S."/>
            <person name="Martinez-Jehanne V."/>
            <person name="Matic I."/>
            <person name="Nassif X."/>
            <person name="Oztas S."/>
            <person name="Petit M.A."/>
            <person name="Pichon C."/>
            <person name="Rouy Z."/>
            <person name="Ruf C.S."/>
            <person name="Schneider D."/>
            <person name="Tourret J."/>
            <person name="Vacherie B."/>
            <person name="Vallenet D."/>
            <person name="Medigue C."/>
            <person name="Rocha E.P.C."/>
            <person name="Denamur E."/>
        </authorList>
    </citation>
    <scope>NUCLEOTIDE SEQUENCE [LARGE SCALE GENOMIC DNA]</scope>
    <source>
        <strain>IAI1</strain>
    </source>
</reference>
<protein>
    <recommendedName>
        <fullName evidence="1">Large ribosomal subunit protein uL11</fullName>
    </recommendedName>
    <alternativeName>
        <fullName evidence="2">50S ribosomal protein L11</fullName>
    </alternativeName>
</protein>
<gene>
    <name evidence="1" type="primary">rplK</name>
    <name type="ordered locus">ECIAI1_4197</name>
</gene>
<comment type="function">
    <text evidence="1">Forms part of the ribosomal stalk which helps the ribosome interact with GTP-bound translation factors.</text>
</comment>
<comment type="subunit">
    <text evidence="1">Part of the ribosomal stalk of the 50S ribosomal subunit. Interacts with L10 and the large rRNA to form the base of the stalk. L10 forms an elongated spine to which L12 dimers bind in a sequential fashion forming a multimeric L10(L12)X complex.</text>
</comment>
<comment type="PTM">
    <text evidence="1">One or more lysine residues are methylated.</text>
</comment>
<comment type="similarity">
    <text evidence="1">Belongs to the universal ribosomal protein uL11 family.</text>
</comment>
<keyword id="KW-0488">Methylation</keyword>
<keyword id="KW-0687">Ribonucleoprotein</keyword>
<keyword id="KW-0689">Ribosomal protein</keyword>
<keyword id="KW-0694">RNA-binding</keyword>
<keyword id="KW-0699">rRNA-binding</keyword>
<name>RL11_ECO8A</name>
<sequence length="142" mass="14875">MAKKVQAYVKLQVAAGMANPSPPVGPALGQQGVNIMEFCKAFNAKTDSIEKGLPIPVVITVYADRSFTFVTKTPPAAVLLKKAAGIKSGSGKPNKDKVGKISRAQLQEIAQTKAADMTGADIEAMTRSIEGTARSMGLVVED</sequence>
<dbReference type="EMBL" id="CU928160">
    <property type="protein sequence ID" value="CAR00956.1"/>
    <property type="molecule type" value="Genomic_DNA"/>
</dbReference>
<dbReference type="RefSeq" id="WP_001085926.1">
    <property type="nucleotide sequence ID" value="NC_011741.1"/>
</dbReference>
<dbReference type="SMR" id="B7M730"/>
<dbReference type="GeneID" id="93777911"/>
<dbReference type="KEGG" id="ecr:ECIAI1_4197"/>
<dbReference type="HOGENOM" id="CLU_074237_2_0_6"/>
<dbReference type="GO" id="GO:0022625">
    <property type="term" value="C:cytosolic large ribosomal subunit"/>
    <property type="evidence" value="ECO:0007669"/>
    <property type="project" value="TreeGrafter"/>
</dbReference>
<dbReference type="GO" id="GO:0070180">
    <property type="term" value="F:large ribosomal subunit rRNA binding"/>
    <property type="evidence" value="ECO:0007669"/>
    <property type="project" value="UniProtKB-UniRule"/>
</dbReference>
<dbReference type="GO" id="GO:0003735">
    <property type="term" value="F:structural constituent of ribosome"/>
    <property type="evidence" value="ECO:0007669"/>
    <property type="project" value="InterPro"/>
</dbReference>
<dbReference type="GO" id="GO:0006412">
    <property type="term" value="P:translation"/>
    <property type="evidence" value="ECO:0007669"/>
    <property type="project" value="UniProtKB-UniRule"/>
</dbReference>
<dbReference type="CDD" id="cd00349">
    <property type="entry name" value="Ribosomal_L11"/>
    <property type="match status" value="1"/>
</dbReference>
<dbReference type="FunFam" id="1.10.10.250:FF:000001">
    <property type="entry name" value="50S ribosomal protein L11"/>
    <property type="match status" value="1"/>
</dbReference>
<dbReference type="FunFam" id="3.30.1550.10:FF:000001">
    <property type="entry name" value="50S ribosomal protein L11"/>
    <property type="match status" value="1"/>
</dbReference>
<dbReference type="Gene3D" id="1.10.10.250">
    <property type="entry name" value="Ribosomal protein L11, C-terminal domain"/>
    <property type="match status" value="1"/>
</dbReference>
<dbReference type="Gene3D" id="3.30.1550.10">
    <property type="entry name" value="Ribosomal protein L11/L12, N-terminal domain"/>
    <property type="match status" value="1"/>
</dbReference>
<dbReference type="HAMAP" id="MF_00736">
    <property type="entry name" value="Ribosomal_uL11"/>
    <property type="match status" value="1"/>
</dbReference>
<dbReference type="InterPro" id="IPR000911">
    <property type="entry name" value="Ribosomal_uL11"/>
</dbReference>
<dbReference type="InterPro" id="IPR006519">
    <property type="entry name" value="Ribosomal_uL11_bac-typ"/>
</dbReference>
<dbReference type="InterPro" id="IPR020783">
    <property type="entry name" value="Ribosomal_uL11_C"/>
</dbReference>
<dbReference type="InterPro" id="IPR036769">
    <property type="entry name" value="Ribosomal_uL11_C_sf"/>
</dbReference>
<dbReference type="InterPro" id="IPR020785">
    <property type="entry name" value="Ribosomal_uL11_CS"/>
</dbReference>
<dbReference type="InterPro" id="IPR020784">
    <property type="entry name" value="Ribosomal_uL11_N"/>
</dbReference>
<dbReference type="InterPro" id="IPR036796">
    <property type="entry name" value="Ribosomal_uL11_N_sf"/>
</dbReference>
<dbReference type="NCBIfam" id="TIGR01632">
    <property type="entry name" value="L11_bact"/>
    <property type="match status" value="1"/>
</dbReference>
<dbReference type="PANTHER" id="PTHR11661">
    <property type="entry name" value="60S RIBOSOMAL PROTEIN L12"/>
    <property type="match status" value="1"/>
</dbReference>
<dbReference type="PANTHER" id="PTHR11661:SF1">
    <property type="entry name" value="LARGE RIBOSOMAL SUBUNIT PROTEIN UL11M"/>
    <property type="match status" value="1"/>
</dbReference>
<dbReference type="Pfam" id="PF00298">
    <property type="entry name" value="Ribosomal_L11"/>
    <property type="match status" value="1"/>
</dbReference>
<dbReference type="Pfam" id="PF03946">
    <property type="entry name" value="Ribosomal_L11_N"/>
    <property type="match status" value="1"/>
</dbReference>
<dbReference type="SMART" id="SM00649">
    <property type="entry name" value="RL11"/>
    <property type="match status" value="1"/>
</dbReference>
<dbReference type="SUPFAM" id="SSF54747">
    <property type="entry name" value="Ribosomal L11/L12e N-terminal domain"/>
    <property type="match status" value="1"/>
</dbReference>
<dbReference type="SUPFAM" id="SSF46906">
    <property type="entry name" value="Ribosomal protein L11, C-terminal domain"/>
    <property type="match status" value="1"/>
</dbReference>
<dbReference type="PROSITE" id="PS00359">
    <property type="entry name" value="RIBOSOMAL_L11"/>
    <property type="match status" value="1"/>
</dbReference>
<evidence type="ECO:0000255" key="1">
    <source>
        <dbReference type="HAMAP-Rule" id="MF_00736"/>
    </source>
</evidence>
<evidence type="ECO:0000305" key="2"/>